<protein>
    <recommendedName>
        <fullName>GDP-fucose protein O-fucosyltransferase 4</fullName>
        <ecNumber evidence="2">2.4.1.221</ecNumber>
    </recommendedName>
    <alternativeName>
        <fullName>Fucosyltransferase XI</fullName>
        <shortName>Fuc-TXI</shortName>
        <shortName>FucT-XI</shortName>
    </alternativeName>
    <alternativeName>
        <fullName>Galactoside 3-L-fucosyltransferase 11</fullName>
        <shortName>Fucosyltransferase 11</shortName>
    </alternativeName>
</protein>
<reference key="1">
    <citation type="submission" date="2006-09" db="EMBL/GenBank/DDBJ databases">
        <authorList>
            <consortium name="NIH - Zebrafish Gene Collection (ZGC) project"/>
        </authorList>
    </citation>
    <scope>NUCLEOTIDE SEQUENCE [LARGE SCALE MRNA]</scope>
    <source>
        <tissue>Embryo</tissue>
    </source>
</reference>
<sequence>MALCLWLFLVLPICCWCQGAVDLGDSGVFQPQSALTDMEFASVSTYRGPGNTDPRPNKELPILLWWSSNLFPHFPGDTERVDCAHSSCLVTSNRKVQLYRRTASIIFYGTDFRAYEAPLPRLPHQTWALFHEESPMNNYLLSHSVGIRLFNYTATFRRESDYPLTLQWLPSLDYLLAPTAISLQEKNHWRQAGLAPVLYMQSHCDVPSDRDRFVQELMKYIEIDSYGKCLNNKPLPEYLEDTSTATSEDRRFMSFVARYKFHLALENGLCPDYMTEKLWRPMHQGCVPIYRGSTTVADWLPNNHSAILVEDFSTPRELADFIKALDQDDVEYLRYLKYKTPSEITNLRLLEGLESREWGVNDMSKPNYLNGFECFVCDKENERLAARKAHRKNPKQNQPPQPKMANSSHMGCPLPSPGYGPVENVEPNDSWLQMWPQDYWQSLDQAEGLESLIRHNVSEPSLLWQHIQSIAVRRARGLSNDSR</sequence>
<keyword id="KW-1015">Disulfide bond</keyword>
<keyword id="KW-0256">Endoplasmic reticulum</keyword>
<keyword id="KW-0325">Glycoprotein</keyword>
<keyword id="KW-0328">Glycosyltransferase</keyword>
<keyword id="KW-0472">Membrane</keyword>
<keyword id="KW-1185">Reference proteome</keyword>
<keyword id="KW-0735">Signal-anchor</keyword>
<keyword id="KW-0808">Transferase</keyword>
<keyword id="KW-0812">Transmembrane</keyword>
<keyword id="KW-1133">Transmembrane helix</keyword>
<accession>Q08C60</accession>
<comment type="function">
    <text evidence="2">Protein O-fucosyltransferase that specifically catalyzes O-fucosylation of serine or threonine residues in EMI domains of target proteins. Attaches fucose through an O-glycosidic linkage. O-fucosylation of EMI domain-containing proteins may be required for facilitating protein folding and secretion.</text>
</comment>
<comment type="catalytic activity">
    <reaction evidence="2">
        <text>L-threonyl-[protein] + GDP-beta-L-fucose = 3-O-(alpha-L-fucosyl)-L-threonyl-[protein] + GDP + H(+)</text>
        <dbReference type="Rhea" id="RHEA:70491"/>
        <dbReference type="Rhea" id="RHEA-COMP:11060"/>
        <dbReference type="Rhea" id="RHEA-COMP:17915"/>
        <dbReference type="ChEBI" id="CHEBI:15378"/>
        <dbReference type="ChEBI" id="CHEBI:30013"/>
        <dbReference type="ChEBI" id="CHEBI:57273"/>
        <dbReference type="ChEBI" id="CHEBI:58189"/>
        <dbReference type="ChEBI" id="CHEBI:189631"/>
        <dbReference type="EC" id="2.4.1.221"/>
    </reaction>
    <physiologicalReaction direction="left-to-right" evidence="2">
        <dbReference type="Rhea" id="RHEA:70492"/>
    </physiologicalReaction>
</comment>
<comment type="catalytic activity">
    <reaction evidence="2">
        <text>L-seryl-[protein] + GDP-beta-L-fucose = 3-O-(alpha-L-fucosyl)-L-seryl-[protein] + GDP + H(+)</text>
        <dbReference type="Rhea" id="RHEA:63644"/>
        <dbReference type="Rhea" id="RHEA-COMP:9863"/>
        <dbReference type="Rhea" id="RHEA-COMP:17914"/>
        <dbReference type="ChEBI" id="CHEBI:15378"/>
        <dbReference type="ChEBI" id="CHEBI:29999"/>
        <dbReference type="ChEBI" id="CHEBI:57273"/>
        <dbReference type="ChEBI" id="CHEBI:58189"/>
        <dbReference type="ChEBI" id="CHEBI:189632"/>
        <dbReference type="EC" id="2.4.1.221"/>
    </reaction>
    <physiologicalReaction direction="left-to-right" evidence="2">
        <dbReference type="Rhea" id="RHEA:63645"/>
    </physiologicalReaction>
</comment>
<comment type="pathway">
    <text evidence="2">Protein modification; protein glycosylation.</text>
</comment>
<comment type="subcellular location">
    <subcellularLocation>
        <location evidence="2">Endoplasmic reticulum membrane</location>
        <topology evidence="3">Single-pass type II membrane protein</topology>
    </subcellularLocation>
</comment>
<comment type="similarity">
    <text evidence="5">Belongs to the glycosyltransferase 10 family.</text>
</comment>
<evidence type="ECO:0000250" key="1">
    <source>
        <dbReference type="UniProtKB" id="Q11130"/>
    </source>
</evidence>
<evidence type="ECO:0000250" key="2">
    <source>
        <dbReference type="UniProtKB" id="Q495W5"/>
    </source>
</evidence>
<evidence type="ECO:0000255" key="3"/>
<evidence type="ECO:0000256" key="4">
    <source>
        <dbReference type="SAM" id="MobiDB-lite"/>
    </source>
</evidence>
<evidence type="ECO:0000305" key="5"/>
<gene>
    <name type="primary">fut11</name>
    <name evidence="2" type="synonym">pofut4</name>
    <name type="ORF">zgc:153537</name>
</gene>
<name>OFUT4_DANRE</name>
<feature type="chain" id="PRO_0000299013" description="GDP-fucose protein O-fucosyltransferase 4">
    <location>
        <begin position="1"/>
        <end position="483"/>
    </location>
</feature>
<feature type="topological domain" description="Cytoplasmic" evidence="3">
    <location>
        <position position="1"/>
    </location>
</feature>
<feature type="transmembrane region" description="Helical; Signal-anchor for type II membrane protein" evidence="3">
    <location>
        <begin position="2"/>
        <end position="21"/>
    </location>
</feature>
<feature type="topological domain" description="Lumenal" evidence="3">
    <location>
        <begin position="22"/>
        <end position="483"/>
    </location>
</feature>
<feature type="region of interest" description="Disordered" evidence="4">
    <location>
        <begin position="387"/>
        <end position="425"/>
    </location>
</feature>
<feature type="glycosylation site" description="N-linked (GlcNAc...) asparagine" evidence="3">
    <location>
        <position position="151"/>
    </location>
</feature>
<feature type="glycosylation site" description="N-linked (GlcNAc...) asparagine" evidence="3">
    <location>
        <position position="303"/>
    </location>
</feature>
<feature type="glycosylation site" description="N-linked (GlcNAc...) asparagine" evidence="3">
    <location>
        <position position="406"/>
    </location>
</feature>
<feature type="glycosylation site" description="N-linked (GlcNAc...) asparagine" evidence="3">
    <location>
        <position position="428"/>
    </location>
</feature>
<feature type="glycosylation site" description="N-linked (GlcNAc...) asparagine" evidence="3">
    <location>
        <position position="456"/>
    </location>
</feature>
<feature type="glycosylation site" description="N-linked (GlcNAc...) asparagine" evidence="3">
    <location>
        <position position="480"/>
    </location>
</feature>
<feature type="disulfide bond" evidence="1">
    <location>
        <begin position="374"/>
        <end position="377"/>
    </location>
</feature>
<dbReference type="EC" id="2.4.1.221" evidence="2"/>
<dbReference type="EMBL" id="BC124380">
    <property type="protein sequence ID" value="AAI24381.1"/>
    <property type="molecule type" value="mRNA"/>
</dbReference>
<dbReference type="RefSeq" id="NP_001070642.1">
    <property type="nucleotide sequence ID" value="NM_001077174.1"/>
</dbReference>
<dbReference type="SMR" id="Q08C60"/>
<dbReference type="FunCoup" id="Q08C60">
    <property type="interactions" value="244"/>
</dbReference>
<dbReference type="STRING" id="7955.ENSDARP00000134474"/>
<dbReference type="CAZy" id="GT10">
    <property type="family name" value="Glycosyltransferase Family 10"/>
</dbReference>
<dbReference type="GlyCosmos" id="Q08C60">
    <property type="glycosylation" value="6 sites, No reported glycans"/>
</dbReference>
<dbReference type="PaxDb" id="7955-ENSDARP00000074921"/>
<dbReference type="Ensembl" id="ENSDART00000165099">
    <property type="protein sequence ID" value="ENSDARP00000134474"/>
    <property type="gene ID" value="ENSDARG00000102402"/>
</dbReference>
<dbReference type="GeneID" id="568888"/>
<dbReference type="KEGG" id="dre:568888"/>
<dbReference type="AGR" id="ZFIN:ZDB-GENE-060929-728"/>
<dbReference type="CTD" id="170384"/>
<dbReference type="ZFIN" id="ZDB-GENE-060929-728">
    <property type="gene designation" value="fut11"/>
</dbReference>
<dbReference type="eggNOG" id="KOG2619">
    <property type="taxonomic scope" value="Eukaryota"/>
</dbReference>
<dbReference type="HOGENOM" id="CLU_032075_0_1_1"/>
<dbReference type="InParanoid" id="Q08C60"/>
<dbReference type="OMA" id="EHREWGV"/>
<dbReference type="OrthoDB" id="9993460at2759"/>
<dbReference type="PhylomeDB" id="Q08C60"/>
<dbReference type="TreeFam" id="TF316348"/>
<dbReference type="Reactome" id="R-DRE-9037629">
    <property type="pathway name" value="Lewis blood group biosynthesis"/>
</dbReference>
<dbReference type="UniPathway" id="UPA00378"/>
<dbReference type="PRO" id="PR:Q08C60"/>
<dbReference type="Proteomes" id="UP000000437">
    <property type="component" value="Chromosome 14"/>
</dbReference>
<dbReference type="Bgee" id="ENSDARG00000102402">
    <property type="expression patterns" value="Expressed in early embryo and 21 other cell types or tissues"/>
</dbReference>
<dbReference type="GO" id="GO:0005783">
    <property type="term" value="C:endoplasmic reticulum"/>
    <property type="evidence" value="ECO:0000250"/>
    <property type="project" value="UniProtKB"/>
</dbReference>
<dbReference type="GO" id="GO:0005789">
    <property type="term" value="C:endoplasmic reticulum membrane"/>
    <property type="evidence" value="ECO:0007669"/>
    <property type="project" value="UniProtKB-SubCell"/>
</dbReference>
<dbReference type="GO" id="GO:0000139">
    <property type="term" value="C:Golgi membrane"/>
    <property type="evidence" value="ECO:0007669"/>
    <property type="project" value="InterPro"/>
</dbReference>
<dbReference type="GO" id="GO:0046920">
    <property type="term" value="F:alpha-(1-&gt;3)-fucosyltransferase activity"/>
    <property type="evidence" value="ECO:0000318"/>
    <property type="project" value="GO_Central"/>
</dbReference>
<dbReference type="GO" id="GO:0046922">
    <property type="term" value="F:peptide-O-fucosyltransferase activity"/>
    <property type="evidence" value="ECO:0000250"/>
    <property type="project" value="UniProtKB"/>
</dbReference>
<dbReference type="GO" id="GO:0036065">
    <property type="term" value="P:fucosylation"/>
    <property type="evidence" value="ECO:0000318"/>
    <property type="project" value="GO_Central"/>
</dbReference>
<dbReference type="GO" id="GO:0050714">
    <property type="term" value="P:positive regulation of protein secretion"/>
    <property type="evidence" value="ECO:0000250"/>
    <property type="project" value="UniProtKB"/>
</dbReference>
<dbReference type="FunFam" id="3.40.50.11660:FF:000002">
    <property type="entry name" value="Alpha-(1,3)-fucosyltransferase"/>
    <property type="match status" value="1"/>
</dbReference>
<dbReference type="Gene3D" id="3.40.50.11660">
    <property type="entry name" value="Glycosyl transferase family 10, C-terminal domain"/>
    <property type="match status" value="1"/>
</dbReference>
<dbReference type="InterPro" id="IPR017176">
    <property type="entry name" value="Alpha-1_3-FUT_met"/>
</dbReference>
<dbReference type="InterPro" id="IPR055270">
    <property type="entry name" value="Glyco_tran_10_C"/>
</dbReference>
<dbReference type="InterPro" id="IPR031481">
    <property type="entry name" value="Glyco_tran_10_N"/>
</dbReference>
<dbReference type="InterPro" id="IPR001503">
    <property type="entry name" value="Glyco_trans_10"/>
</dbReference>
<dbReference type="InterPro" id="IPR038577">
    <property type="entry name" value="GT10-like_C_sf"/>
</dbReference>
<dbReference type="PANTHER" id="PTHR11929">
    <property type="entry name" value="ALPHA- 1,3 -FUCOSYLTRANSFERASE"/>
    <property type="match status" value="1"/>
</dbReference>
<dbReference type="PANTHER" id="PTHR11929:SF198">
    <property type="entry name" value="ALPHA-(1,3)-FUCOSYLTRANSFERASE 11"/>
    <property type="match status" value="1"/>
</dbReference>
<dbReference type="Pfam" id="PF17039">
    <property type="entry name" value="Glyco_tran_10_N"/>
    <property type="match status" value="1"/>
</dbReference>
<dbReference type="Pfam" id="PF00852">
    <property type="entry name" value="Glyco_transf_10"/>
    <property type="match status" value="1"/>
</dbReference>
<dbReference type="PIRSF" id="PIRSF037332">
    <property type="entry name" value="Alpha1_3FUT_met"/>
    <property type="match status" value="1"/>
</dbReference>
<dbReference type="SUPFAM" id="SSF53756">
    <property type="entry name" value="UDP-Glycosyltransferase/glycogen phosphorylase"/>
    <property type="match status" value="1"/>
</dbReference>
<proteinExistence type="evidence at transcript level"/>
<organism>
    <name type="scientific">Danio rerio</name>
    <name type="common">Zebrafish</name>
    <name type="synonym">Brachydanio rerio</name>
    <dbReference type="NCBI Taxonomy" id="7955"/>
    <lineage>
        <taxon>Eukaryota</taxon>
        <taxon>Metazoa</taxon>
        <taxon>Chordata</taxon>
        <taxon>Craniata</taxon>
        <taxon>Vertebrata</taxon>
        <taxon>Euteleostomi</taxon>
        <taxon>Actinopterygii</taxon>
        <taxon>Neopterygii</taxon>
        <taxon>Teleostei</taxon>
        <taxon>Ostariophysi</taxon>
        <taxon>Cypriniformes</taxon>
        <taxon>Danionidae</taxon>
        <taxon>Danioninae</taxon>
        <taxon>Danio</taxon>
    </lineage>
</organism>